<evidence type="ECO:0000255" key="1">
    <source>
        <dbReference type="PROSITE-ProRule" id="PRU00214"/>
    </source>
</evidence>
<evidence type="ECO:0000256" key="2">
    <source>
        <dbReference type="SAM" id="MobiDB-lite"/>
    </source>
</evidence>
<evidence type="ECO:0000269" key="3">
    <source>
    </source>
</evidence>
<evidence type="ECO:0000269" key="4">
    <source>
    </source>
</evidence>
<evidence type="ECO:0000303" key="5">
    <source>
    </source>
</evidence>
<evidence type="ECO:0000305" key="6"/>
<evidence type="ECO:0000305" key="7">
    <source>
    </source>
</evidence>
<evidence type="ECO:0007744" key="8">
    <source>
        <dbReference type="PDB" id="2LO0"/>
    </source>
</evidence>
<evidence type="ECO:0007829" key="9">
    <source>
        <dbReference type="PDB" id="2LO0"/>
    </source>
</evidence>
<protein>
    <recommendedName>
        <fullName evidence="5">Golgi to ER traffic protein 5</fullName>
    </recommendedName>
</protein>
<proteinExistence type="evidence at protein level"/>
<gene>
    <name evidence="5" type="primary">get5</name>
    <name type="ORF">AFUA_5G01770</name>
</gene>
<sequence length="272" mass="29694">MSTVDQSTVTTALSSSSSNRHQGNDTYSIPKHSGTTSTITITMNEVSFVKSYLSTLDSRPIKLRSDHVFDPEQVGLRVPYTLPRLHAPHPEMPKKTKQPLAPGSSKSITVHLKSARNPALEFSLPNTALTTTSVQDLKDAVRERVTDAQGNKISLDKIKILYKRKPVTGKTIAEVLADEPVRLSGGKEVEFGVMIIGGAQVAVSAGAGERASAEQKESYEPPKPAVGPSGESVVATEAFWDDLQGFLEQRLKDYDEANKLRVLFKEAWRSSF</sequence>
<organism>
    <name type="scientific">Aspergillus fumigatus (strain ATCC MYA-4609 / CBS 101355 / FGSC A1100 / Af293)</name>
    <name type="common">Neosartorya fumigata</name>
    <dbReference type="NCBI Taxonomy" id="330879"/>
    <lineage>
        <taxon>Eukaryota</taxon>
        <taxon>Fungi</taxon>
        <taxon>Dikarya</taxon>
        <taxon>Ascomycota</taxon>
        <taxon>Pezizomycotina</taxon>
        <taxon>Eurotiomycetes</taxon>
        <taxon>Eurotiomycetidae</taxon>
        <taxon>Eurotiales</taxon>
        <taxon>Aspergillaceae</taxon>
        <taxon>Aspergillus</taxon>
        <taxon>Aspergillus subgen. Fumigati</taxon>
    </lineage>
</organism>
<dbReference type="EMBL" id="AAHF01000011">
    <property type="protein sequence ID" value="EAL86127.1"/>
    <property type="molecule type" value="Genomic_DNA"/>
</dbReference>
<dbReference type="RefSeq" id="XP_748165.1">
    <property type="nucleotide sequence ID" value="XM_743072.1"/>
</dbReference>
<dbReference type="PDB" id="2LO0">
    <property type="method" value="NMR"/>
    <property type="chains" value="A/B=201-272"/>
</dbReference>
<dbReference type="PDBsum" id="2LO0"/>
<dbReference type="SMR" id="Q4WE50"/>
<dbReference type="STRING" id="330879.Q4WE50"/>
<dbReference type="EnsemblFungi" id="EAL86127">
    <property type="protein sequence ID" value="EAL86127"/>
    <property type="gene ID" value="AFUA_5G01770"/>
</dbReference>
<dbReference type="GeneID" id="3505764"/>
<dbReference type="KEGG" id="afm:AFUA_5G01770"/>
<dbReference type="VEuPathDB" id="FungiDB:Afu5g01770"/>
<dbReference type="eggNOG" id="ENOG502S36W">
    <property type="taxonomic scope" value="Eukaryota"/>
</dbReference>
<dbReference type="HOGENOM" id="CLU_075131_0_0_1"/>
<dbReference type="InParanoid" id="Q4WE50"/>
<dbReference type="OMA" id="YILPRMP"/>
<dbReference type="OrthoDB" id="5366541at2759"/>
<dbReference type="EvolutionaryTrace" id="Q4WE50"/>
<dbReference type="Proteomes" id="UP000002530">
    <property type="component" value="Chromosome 5"/>
</dbReference>
<dbReference type="GO" id="GO:0022627">
    <property type="term" value="C:cytosolic small ribosomal subunit"/>
    <property type="evidence" value="ECO:0000318"/>
    <property type="project" value="GO_Central"/>
</dbReference>
<dbReference type="FunFam" id="1.10.286.70:FF:000001">
    <property type="entry name" value="Uncharacterized protein B2O8.280"/>
    <property type="match status" value="1"/>
</dbReference>
<dbReference type="Gene3D" id="1.10.286.70">
    <property type="entry name" value="Get5 dimerization domain"/>
    <property type="match status" value="1"/>
</dbReference>
<dbReference type="InterPro" id="IPR049256">
    <property type="entry name" value="Get5_C"/>
</dbReference>
<dbReference type="InterPro" id="IPR024737">
    <property type="entry name" value="Get5_N"/>
</dbReference>
<dbReference type="PANTHER" id="PTHR12650">
    <property type="entry name" value="40S RIBOSOMAL PROTEIN S30/UBIQUITIN-LIKE PROTEIN FUBI"/>
    <property type="match status" value="1"/>
</dbReference>
<dbReference type="PANTHER" id="PTHR12650:SF20">
    <property type="entry name" value="UBIQUITIN-LIKE DOMAIN-CONTAINING PROTEIN"/>
    <property type="match status" value="1"/>
</dbReference>
<dbReference type="Pfam" id="PF17183">
    <property type="entry name" value="Get5_C"/>
    <property type="match status" value="1"/>
</dbReference>
<dbReference type="Pfam" id="PF12754">
    <property type="entry name" value="Get5_N"/>
    <property type="match status" value="1"/>
</dbReference>
<comment type="function">
    <text evidence="3 4">Component of the get4/get5/sgt2 sorting complex involved in the GET (guided entry of TA proteins) pathway that leads to the insertion of tail-anchored (TA) proteins into the endoplasmic reticulum (PubMed:21832041, PubMed:22262836). Get4 and get5 form an obligate complex that catalyzes the transfer of tail-anchored proteins destined to the endoplasmic reticulum from sgt2 to the cytosolic targeting factor which then targets the TA protein to the ER membrane via get1/get2 (PubMed:21832041, PubMed:22262836).</text>
</comment>
<comment type="subunit">
    <text evidence="3 4">Forms homodimers via its C-terminal domain (PubMed:21832041). Component of the get4/get5/sgt2 sorting complex (PubMed:21832041, PubMed:22262836). Binds directly sgt12 homodimers (PubMed:21832041).</text>
</comment>
<comment type="subcellular location">
    <subcellularLocation>
        <location evidence="7">Cytoplasm</location>
    </subcellularLocation>
</comment>
<comment type="domain">
    <text evidence="4">The C-terminal region (residues 201 to 272) is involved in homodimerization.</text>
</comment>
<comment type="similarity">
    <text evidence="6">Belongs to the GET5 family.</text>
</comment>
<name>GET5_ASPFU</name>
<keyword id="KW-0002">3D-structure</keyword>
<keyword id="KW-0963">Cytoplasm</keyword>
<keyword id="KW-1185">Reference proteome</keyword>
<keyword id="KW-0813">Transport</keyword>
<reference key="1">
    <citation type="journal article" date="2005" name="Nature">
        <title>Genomic sequence of the pathogenic and allergenic filamentous fungus Aspergillus fumigatus.</title>
        <authorList>
            <person name="Nierman W.C."/>
            <person name="Pain A."/>
            <person name="Anderson M.J."/>
            <person name="Wortman J.R."/>
            <person name="Kim H.S."/>
            <person name="Arroyo J."/>
            <person name="Berriman M."/>
            <person name="Abe K."/>
            <person name="Archer D.B."/>
            <person name="Bermejo C."/>
            <person name="Bennett J.W."/>
            <person name="Bowyer P."/>
            <person name="Chen D."/>
            <person name="Collins M."/>
            <person name="Coulsen R."/>
            <person name="Davies R."/>
            <person name="Dyer P.S."/>
            <person name="Farman M.L."/>
            <person name="Fedorova N."/>
            <person name="Fedorova N.D."/>
            <person name="Feldblyum T.V."/>
            <person name="Fischer R."/>
            <person name="Fosker N."/>
            <person name="Fraser A."/>
            <person name="Garcia J.L."/>
            <person name="Garcia M.J."/>
            <person name="Goble A."/>
            <person name="Goldman G.H."/>
            <person name="Gomi K."/>
            <person name="Griffith-Jones S."/>
            <person name="Gwilliam R."/>
            <person name="Haas B.J."/>
            <person name="Haas H."/>
            <person name="Harris D.E."/>
            <person name="Horiuchi H."/>
            <person name="Huang J."/>
            <person name="Humphray S."/>
            <person name="Jimenez J."/>
            <person name="Keller N."/>
            <person name="Khouri H."/>
            <person name="Kitamoto K."/>
            <person name="Kobayashi T."/>
            <person name="Konzack S."/>
            <person name="Kulkarni R."/>
            <person name="Kumagai T."/>
            <person name="Lafton A."/>
            <person name="Latge J.-P."/>
            <person name="Li W."/>
            <person name="Lord A."/>
            <person name="Lu C."/>
            <person name="Majoros W.H."/>
            <person name="May G.S."/>
            <person name="Miller B.L."/>
            <person name="Mohamoud Y."/>
            <person name="Molina M."/>
            <person name="Monod M."/>
            <person name="Mouyna I."/>
            <person name="Mulligan S."/>
            <person name="Murphy L.D."/>
            <person name="O'Neil S."/>
            <person name="Paulsen I."/>
            <person name="Penalva M.A."/>
            <person name="Pertea M."/>
            <person name="Price C."/>
            <person name="Pritchard B.L."/>
            <person name="Quail M.A."/>
            <person name="Rabbinowitsch E."/>
            <person name="Rawlins N."/>
            <person name="Rajandream M.A."/>
            <person name="Reichard U."/>
            <person name="Renauld H."/>
            <person name="Robson G.D."/>
            <person name="Rodriguez de Cordoba S."/>
            <person name="Rodriguez-Pena J.M."/>
            <person name="Ronning C.M."/>
            <person name="Rutter S."/>
            <person name="Salzberg S.L."/>
            <person name="Sanchez M."/>
            <person name="Sanchez-Ferrero J.C."/>
            <person name="Saunders D."/>
            <person name="Seeger K."/>
            <person name="Squares R."/>
            <person name="Squares S."/>
            <person name="Takeuchi M."/>
            <person name="Tekaia F."/>
            <person name="Turner G."/>
            <person name="Vazquez de Aldana C.R."/>
            <person name="Weidman J."/>
            <person name="White O."/>
            <person name="Woodward J.R."/>
            <person name="Yu J.-H."/>
            <person name="Fraser C.M."/>
            <person name="Galagan J.E."/>
            <person name="Asai K."/>
            <person name="Machida M."/>
            <person name="Hall N."/>
            <person name="Barrell B.G."/>
            <person name="Denning D.W."/>
        </authorList>
    </citation>
    <scope>NUCLEOTIDE SEQUENCE [LARGE SCALE GENOMIC DNA]</scope>
    <source>
        <strain>ATCC MYA-4609 / CBS 101355 / FGSC A1100 / Af293</strain>
    </source>
</reference>
<reference key="2">
    <citation type="journal article" date="2011" name="J. Biol. Chem.">
        <title>A structural model of the Sgt2 protein and its interactions with chaperones and the Get4/Get5 complex.</title>
        <authorList>
            <person name="Chartron J.W."/>
            <person name="Gonzalez G.M."/>
            <person name="Clemons W.M."/>
        </authorList>
    </citation>
    <scope>FUNCTION</scope>
    <scope>SUBUNIT</scope>
    <scope>INTERACTION WITH SGT12</scope>
</reference>
<reference evidence="8" key="3">
    <citation type="journal article" date="2012" name="J. Biol. Chem.">
        <title>Get5 carboxyl-terminal domain is a novel dimerization motif that tethers an extended Get4/Get5 complex.</title>
        <authorList>
            <person name="Chartron J.W."/>
            <person name="VanderVelde D.G."/>
            <person name="Rao M."/>
            <person name="Clemons W.M."/>
        </authorList>
    </citation>
    <scope>STRUCTURE BY NMR OF 201-272</scope>
    <scope>FUNCTION</scope>
    <scope>DOMAIN</scope>
    <scope>SUBUNIT</scope>
</reference>
<accession>Q4WE50</accession>
<feature type="chain" id="PRO_0000459359" description="Golgi to ER traffic protein 5">
    <location>
        <begin position="1"/>
        <end position="272"/>
    </location>
</feature>
<feature type="domain" description="Ubiquitin-like" evidence="1">
    <location>
        <begin position="108"/>
        <end position="198"/>
    </location>
</feature>
<feature type="region of interest" description="Disordered" evidence="2">
    <location>
        <begin position="1"/>
        <end position="35"/>
    </location>
</feature>
<feature type="region of interest" description="Disordered" evidence="2">
    <location>
        <begin position="85"/>
        <end position="105"/>
    </location>
</feature>
<feature type="region of interest" description="Disordered" evidence="2">
    <location>
        <begin position="212"/>
        <end position="231"/>
    </location>
</feature>
<feature type="turn" evidence="9">
    <location>
        <begin position="232"/>
        <end position="235"/>
    </location>
</feature>
<feature type="helix" evidence="9">
    <location>
        <begin position="237"/>
        <end position="251"/>
    </location>
</feature>
<feature type="helix" evidence="9">
    <location>
        <begin position="254"/>
        <end position="269"/>
    </location>
</feature>